<protein>
    <recommendedName>
        <fullName>Subtilisin inhibitor-like protein 12</fullName>
        <shortName>SIL-12</shortName>
        <shortName>SIL12</shortName>
    </recommendedName>
</protein>
<comment type="function">
    <text>Strong inhibitory activity toward subtilisin BPN' and, to a lesser extent, toward trypsin.</text>
</comment>
<comment type="subunit">
    <text>Homodimer.</text>
</comment>
<comment type="subcellular location">
    <subcellularLocation>
        <location>Secreted</location>
    </subcellularLocation>
</comment>
<comment type="similarity">
    <text evidence="2">Belongs to the protease inhibitor I16 (SSI) family.</text>
</comment>
<feature type="chain" id="PRO_0000208663" description="Subtilisin inhibitor-like protein 12">
    <location>
        <begin position="1"/>
        <end position="111"/>
    </location>
</feature>
<feature type="site" description="Reactive bond" evidence="1">
    <location>
        <begin position="71"/>
        <end position="72"/>
    </location>
</feature>
<feature type="disulfide bond" evidence="1">
    <location>
        <begin position="31"/>
        <end position="46"/>
    </location>
</feature>
<feature type="disulfide bond" evidence="1">
    <location>
        <begin position="69"/>
        <end position="99"/>
    </location>
</feature>
<reference key="1">
    <citation type="journal article" date="1996" name="Biochim. Biophys. Acta">
        <title>New subtilisin-trypsin inhibitors produced by Streptomyces: primary structures and their relationship to other proteinase inhibitors from Streptomyces.</title>
        <authorList>
            <person name="Terabe M."/>
            <person name="Kojima S."/>
            <person name="Taguchi S."/>
            <person name="Momose H."/>
            <person name="Miura K."/>
        </authorList>
    </citation>
    <scope>PROTEIN SEQUENCE</scope>
    <scope>CHARACTERIZATION</scope>
    <source>
        <strain>ATCC 27438 / DSM 40578 / JCM 4772 / NBRC 13472 / NRRL 2387 / M5-13184</strain>
    </source>
</reference>
<dbReference type="PIR" id="S65720">
    <property type="entry name" value="S65720"/>
</dbReference>
<dbReference type="SMR" id="Q9R641"/>
<dbReference type="STRING" id="68042.GCA_001553435_06428"/>
<dbReference type="MEROPS" id="I16.013"/>
<dbReference type="GO" id="GO:0005576">
    <property type="term" value="C:extracellular region"/>
    <property type="evidence" value="ECO:0007669"/>
    <property type="project" value="UniProtKB-SubCell"/>
</dbReference>
<dbReference type="GO" id="GO:0004867">
    <property type="term" value="F:serine-type endopeptidase inhibitor activity"/>
    <property type="evidence" value="ECO:0007669"/>
    <property type="project" value="UniProtKB-UniRule"/>
</dbReference>
<dbReference type="Gene3D" id="3.30.350.10">
    <property type="entry name" value="Subtilisin inhibitor-like"/>
    <property type="match status" value="1"/>
</dbReference>
<dbReference type="HAMAP" id="MF_00778">
    <property type="entry name" value="SSI"/>
    <property type="match status" value="1"/>
</dbReference>
<dbReference type="InterPro" id="IPR000691">
    <property type="entry name" value="Prot_inh_I16_SSI"/>
</dbReference>
<dbReference type="InterPro" id="IPR020054">
    <property type="entry name" value="Prot_inh_SSI_I16_CS"/>
</dbReference>
<dbReference type="InterPro" id="IPR023549">
    <property type="entry name" value="Subtilisin_inhibitor"/>
</dbReference>
<dbReference type="InterPro" id="IPR036819">
    <property type="entry name" value="Subtilisin_inhibitor-like_sf"/>
</dbReference>
<dbReference type="Pfam" id="PF00720">
    <property type="entry name" value="SSI"/>
    <property type="match status" value="1"/>
</dbReference>
<dbReference type="PRINTS" id="PR00294">
    <property type="entry name" value="SSBTLNINHBTR"/>
</dbReference>
<dbReference type="SUPFAM" id="SSF55399">
    <property type="entry name" value="Subtilisin inhibitor"/>
    <property type="match status" value="1"/>
</dbReference>
<dbReference type="PROSITE" id="PS00999">
    <property type="entry name" value="SSI"/>
    <property type="match status" value="1"/>
</dbReference>
<evidence type="ECO:0000250" key="1"/>
<evidence type="ECO:0000305" key="2"/>
<sequence length="111" mass="11696">SLYPASALVLTVGHGADAATAEVQRAVTLSCRPTPTGTHPAPAQACAELHSVGGALGLLRTGAEPGRMCTKEWRPITVTAEGVWDGRRVSYEHTFANNCFKNAAPTTVFEF</sequence>
<name>SSI12_STRHY</name>
<organism>
    <name type="scientific">Streptomyces hygroscopicus</name>
    <dbReference type="NCBI Taxonomy" id="1912"/>
    <lineage>
        <taxon>Bacteria</taxon>
        <taxon>Bacillati</taxon>
        <taxon>Actinomycetota</taxon>
        <taxon>Actinomycetes</taxon>
        <taxon>Kitasatosporales</taxon>
        <taxon>Streptomycetaceae</taxon>
        <taxon>Streptomyces</taxon>
        <taxon>Streptomyces violaceusniger group</taxon>
    </lineage>
</organism>
<keyword id="KW-0903">Direct protein sequencing</keyword>
<keyword id="KW-1015">Disulfide bond</keyword>
<keyword id="KW-0646">Protease inhibitor</keyword>
<keyword id="KW-0964">Secreted</keyword>
<keyword id="KW-0722">Serine protease inhibitor</keyword>
<proteinExistence type="evidence at protein level"/>
<accession>Q9R641</accession>